<organism>
    <name type="scientific">Edwardsiella ictaluri (strain 93-146)</name>
    <dbReference type="NCBI Taxonomy" id="634503"/>
    <lineage>
        <taxon>Bacteria</taxon>
        <taxon>Pseudomonadati</taxon>
        <taxon>Pseudomonadota</taxon>
        <taxon>Gammaproteobacteria</taxon>
        <taxon>Enterobacterales</taxon>
        <taxon>Hafniaceae</taxon>
        <taxon>Edwardsiella</taxon>
    </lineage>
</organism>
<keyword id="KW-0046">Antibiotic resistance</keyword>
<keyword id="KW-0997">Cell inner membrane</keyword>
<keyword id="KW-1003">Cell membrane</keyword>
<keyword id="KW-0472">Membrane</keyword>
<keyword id="KW-0812">Transmembrane</keyword>
<keyword id="KW-1133">Transmembrane helix</keyword>
<keyword id="KW-0813">Transport</keyword>
<protein>
    <recommendedName>
        <fullName>Multidrug transporter MdfA</fullName>
    </recommendedName>
</protein>
<gene>
    <name type="primary">mdfA</name>
    <name type="ordered locus">NT01EI_3857</name>
</gene>
<evidence type="ECO:0000250" key="1"/>
<evidence type="ECO:0000255" key="2"/>
<evidence type="ECO:0000305" key="3"/>
<dbReference type="EMBL" id="CP001600">
    <property type="protein sequence ID" value="ACR70976.2"/>
    <property type="molecule type" value="Genomic_DNA"/>
</dbReference>
<dbReference type="RefSeq" id="WP_015873007.1">
    <property type="nucleotide sequence ID" value="NZ_CP169062.1"/>
</dbReference>
<dbReference type="SMR" id="C5BC70"/>
<dbReference type="STRING" id="67780.B6E78_10830"/>
<dbReference type="KEGG" id="eic:NT01EI_3857"/>
<dbReference type="PATRIC" id="fig|634503.3.peg.3439"/>
<dbReference type="HOGENOM" id="CLU_001265_47_2_6"/>
<dbReference type="OrthoDB" id="9814303at2"/>
<dbReference type="Proteomes" id="UP000001485">
    <property type="component" value="Chromosome"/>
</dbReference>
<dbReference type="GO" id="GO:0005886">
    <property type="term" value="C:plasma membrane"/>
    <property type="evidence" value="ECO:0007669"/>
    <property type="project" value="UniProtKB-SubCell"/>
</dbReference>
<dbReference type="GO" id="GO:0015385">
    <property type="term" value="F:sodium:proton antiporter activity"/>
    <property type="evidence" value="ECO:0007669"/>
    <property type="project" value="TreeGrafter"/>
</dbReference>
<dbReference type="GO" id="GO:0046677">
    <property type="term" value="P:response to antibiotic"/>
    <property type="evidence" value="ECO:0007669"/>
    <property type="project" value="UniProtKB-KW"/>
</dbReference>
<dbReference type="GO" id="GO:1990961">
    <property type="term" value="P:xenobiotic detoxification by transmembrane export across the plasma membrane"/>
    <property type="evidence" value="ECO:0007669"/>
    <property type="project" value="TreeGrafter"/>
</dbReference>
<dbReference type="CDD" id="cd17320">
    <property type="entry name" value="MFS_MdfA_MDR_like"/>
    <property type="match status" value="1"/>
</dbReference>
<dbReference type="Gene3D" id="1.20.1720.10">
    <property type="entry name" value="Multidrug resistance protein D"/>
    <property type="match status" value="1"/>
</dbReference>
<dbReference type="InterPro" id="IPR011701">
    <property type="entry name" value="MFS"/>
</dbReference>
<dbReference type="InterPro" id="IPR020846">
    <property type="entry name" value="MFS_dom"/>
</dbReference>
<dbReference type="InterPro" id="IPR036259">
    <property type="entry name" value="MFS_trans_sf"/>
</dbReference>
<dbReference type="InterPro" id="IPR005829">
    <property type="entry name" value="Sugar_transporter_CS"/>
</dbReference>
<dbReference type="NCBIfam" id="NF011931">
    <property type="entry name" value="PRK15402.1"/>
    <property type="match status" value="1"/>
</dbReference>
<dbReference type="PANTHER" id="PTHR23502">
    <property type="entry name" value="MAJOR FACILITATOR SUPERFAMILY"/>
    <property type="match status" value="1"/>
</dbReference>
<dbReference type="PANTHER" id="PTHR23502:SF43">
    <property type="entry name" value="MULTIDRUG TRANSPORTER MDFA"/>
    <property type="match status" value="1"/>
</dbReference>
<dbReference type="Pfam" id="PF07690">
    <property type="entry name" value="MFS_1"/>
    <property type="match status" value="1"/>
</dbReference>
<dbReference type="SUPFAM" id="SSF103473">
    <property type="entry name" value="MFS general substrate transporter"/>
    <property type="match status" value="1"/>
</dbReference>
<dbReference type="PROSITE" id="PS50850">
    <property type="entry name" value="MFS"/>
    <property type="match status" value="1"/>
</dbReference>
<reference key="1">
    <citation type="submission" date="2009-03" db="EMBL/GenBank/DDBJ databases">
        <title>Complete genome sequence of Edwardsiella ictaluri 93-146.</title>
        <authorList>
            <person name="Williams M.L."/>
            <person name="Gillaspy A.F."/>
            <person name="Dyer D.W."/>
            <person name="Thune R.L."/>
            <person name="Waldbieser G.C."/>
            <person name="Schuster S.C."/>
            <person name="Gipson J."/>
            <person name="Zaitshik J."/>
            <person name="Landry C."/>
            <person name="Lawrence M.L."/>
        </authorList>
    </citation>
    <scope>NUCLEOTIDE SEQUENCE [LARGE SCALE GENOMIC DNA]</scope>
    <source>
        <strain>93-146</strain>
    </source>
</reference>
<comment type="function">
    <text evidence="1">Efflux pump driven by the proton motive force. Confers resistance to a broad spectrum of chemically unrelated drugs (By similarity).</text>
</comment>
<comment type="subunit">
    <text evidence="1">Monomer.</text>
</comment>
<comment type="subcellular location">
    <subcellularLocation>
        <location evidence="1">Cell inner membrane</location>
        <topology evidence="1">Multi-pass membrane protein</topology>
    </subcellularLocation>
</comment>
<comment type="similarity">
    <text evidence="3">Belongs to the major facilitator superfamily. MdfA family.</text>
</comment>
<sequence length="410" mass="44526">MQNHLSSTRRLGRRALLFPLCLVLYEFATYIGNDMIQPGMLSVVQTFGVDESWVPTSMTAYLAGGMFLQWLLGPLSDRIGRRPVMLIGTLYFAATCLAILLTNSIEQFTLMRFLQGISLCFIGAVGYAAIQESFEESVCIKITALMANVALIAPLLGPLAGAAWVHLFPWEGMFILFAALSLLAFLGLYKAMPETATRRGEKLSLSALGRDYTLVLKNRRFLCGSLACGFASLPLLAWIAQSPVIIISGEGLSSYDYGMLQVPIFGMLILGNLTLARLSGRRPVRRLIQLGAWPMVGGLAIAAASTLYSAHAYLWMTAGLSLYAFGIGLANAGLYRLTLFSSTMSKGTVSAAMGMISMFIYTLGIEVGKYAWLLGGNGAFNLFNLISGLLWLALIARMLRDQLVGRMAGR</sequence>
<proteinExistence type="inferred from homology"/>
<accession>C5BC70</accession>
<feature type="chain" id="PRO_0000405335" description="Multidrug transporter MdfA">
    <location>
        <begin position="1"/>
        <end position="410"/>
    </location>
</feature>
<feature type="topological domain" description="Cytoplasmic" evidence="2">
    <location>
        <begin position="1"/>
        <end position="15"/>
    </location>
</feature>
<feature type="transmembrane region" description="Helical" evidence="2">
    <location>
        <begin position="16"/>
        <end position="36"/>
    </location>
</feature>
<feature type="topological domain" description="Periplasmic" evidence="2">
    <location>
        <begin position="37"/>
        <end position="52"/>
    </location>
</feature>
<feature type="transmembrane region" description="Helical" evidence="2">
    <location>
        <begin position="53"/>
        <end position="73"/>
    </location>
</feature>
<feature type="topological domain" description="Cytoplasmic" evidence="2">
    <location>
        <begin position="74"/>
        <end position="82"/>
    </location>
</feature>
<feature type="transmembrane region" description="Helical" evidence="2">
    <location>
        <begin position="83"/>
        <end position="103"/>
    </location>
</feature>
<feature type="topological domain" description="Periplasmic" evidence="2">
    <location>
        <begin position="104"/>
        <end position="109"/>
    </location>
</feature>
<feature type="transmembrane region" description="Helical" evidence="2">
    <location>
        <begin position="110"/>
        <end position="130"/>
    </location>
</feature>
<feature type="topological domain" description="Cytoplasmic" evidence="2">
    <location>
        <begin position="131"/>
        <end position="144"/>
    </location>
</feature>
<feature type="transmembrane region" description="Helical" evidence="2">
    <location>
        <begin position="145"/>
        <end position="165"/>
    </location>
</feature>
<feature type="topological domain" description="Periplasmic" evidence="2">
    <location>
        <position position="166"/>
    </location>
</feature>
<feature type="transmembrane region" description="Helical" evidence="2">
    <location>
        <begin position="167"/>
        <end position="187"/>
    </location>
</feature>
<feature type="topological domain" description="Cytoplasmic" evidence="2">
    <location>
        <begin position="188"/>
        <end position="226"/>
    </location>
</feature>
<feature type="transmembrane region" description="Helical" evidence="2">
    <location>
        <begin position="227"/>
        <end position="247"/>
    </location>
</feature>
<feature type="topological domain" description="Periplasmic" evidence="2">
    <location>
        <begin position="248"/>
        <end position="255"/>
    </location>
</feature>
<feature type="transmembrane region" description="Helical" evidence="2">
    <location>
        <begin position="256"/>
        <end position="276"/>
    </location>
</feature>
<feature type="topological domain" description="Cytoplasmic" evidence="2">
    <location>
        <begin position="277"/>
        <end position="286"/>
    </location>
</feature>
<feature type="transmembrane region" description="Helical" evidence="2">
    <location>
        <begin position="287"/>
        <end position="307"/>
    </location>
</feature>
<feature type="topological domain" description="Periplasmic" evidence="2">
    <location>
        <begin position="308"/>
        <end position="313"/>
    </location>
</feature>
<feature type="transmembrane region" description="Helical" evidence="2">
    <location>
        <begin position="314"/>
        <end position="334"/>
    </location>
</feature>
<feature type="topological domain" description="Cytoplasmic" evidence="2">
    <location>
        <begin position="335"/>
        <end position="346"/>
    </location>
</feature>
<feature type="transmembrane region" description="Helical" evidence="2">
    <location>
        <begin position="347"/>
        <end position="367"/>
    </location>
</feature>
<feature type="topological domain" description="Periplasmic" evidence="2">
    <location>
        <begin position="368"/>
        <end position="375"/>
    </location>
</feature>
<feature type="transmembrane region" description="Helical" evidence="2">
    <location>
        <begin position="376"/>
        <end position="396"/>
    </location>
</feature>
<feature type="topological domain" description="Cytoplasmic" evidence="2">
    <location>
        <begin position="397"/>
        <end position="410"/>
    </location>
</feature>
<name>MDFA_EDWI9</name>